<comment type="function">
    <text evidence="1">Ubiquitin-like modifier involved in autophagosomes formation. May mediate the delivery of the autophagosomes to the vacuole via the microtubule cytoskeleton.</text>
</comment>
<comment type="subunit">
    <text evidence="3 5">Interacts with ATG4 (By similarity). Interacts with NBR1 (PubMed:21606687).</text>
</comment>
<comment type="subcellular location">
    <subcellularLocation>
        <location evidence="1">Cytoplasmic vesicle</location>
        <location evidence="1">Autophagosome membrane</location>
        <topology evidence="1">Lipid-anchor</topology>
    </subcellularLocation>
    <subcellularLocation>
        <location evidence="1">Vacuole membrane</location>
        <topology evidence="1">Lipid-anchor</topology>
    </subcellularLocation>
    <subcellularLocation>
        <location evidence="2">Cytoplasm</location>
        <location evidence="2">Cytoskeleton</location>
    </subcellularLocation>
</comment>
<comment type="tissue specificity">
    <text evidence="4">Constitutively expressed.</text>
</comment>
<comment type="PTM">
    <text evidence="1">Gly-115 forms then a thioester bond with the 'Cys-558' of ATG7 (E1-like activating enzyme) before being transferred to the 'Cys-258' of ATG3 (the specific E2 conjugating enzyme), in order to be finally amidated with phosphatidylethanolamine. This lipid modification anchors ATG8 to autophagosomes.</text>
</comment>
<comment type="similarity">
    <text evidence="6">Belongs to the ATG8 family.</text>
</comment>
<name>ATG8I_ARATH</name>
<dbReference type="EMBL" id="AF492760">
    <property type="protein sequence ID" value="AAM70189.1"/>
    <property type="molecule type" value="mRNA"/>
</dbReference>
<dbReference type="EMBL" id="AB073183">
    <property type="protein sequence ID" value="BAB88395.1"/>
    <property type="molecule type" value="mRNA"/>
</dbReference>
<dbReference type="EMBL" id="AB028619">
    <property type="protein sequence ID" value="BAB01347.1"/>
    <property type="molecule type" value="Genomic_DNA"/>
</dbReference>
<dbReference type="EMBL" id="CP002686">
    <property type="protein sequence ID" value="AEE75695.1"/>
    <property type="molecule type" value="Genomic_DNA"/>
</dbReference>
<dbReference type="EMBL" id="AY086155">
    <property type="protein sequence ID" value="AAM63360.1"/>
    <property type="molecule type" value="mRNA"/>
</dbReference>
<dbReference type="EMBL" id="BT024554">
    <property type="protein sequence ID" value="ABD38893.1"/>
    <property type="molecule type" value="mRNA"/>
</dbReference>
<dbReference type="RefSeq" id="NP_566518.1">
    <property type="nucleotide sequence ID" value="NM_112426.4"/>
</dbReference>
<dbReference type="SMR" id="Q9LRP7"/>
<dbReference type="BioGRID" id="6132">
    <property type="interactions" value="1"/>
</dbReference>
<dbReference type="FunCoup" id="Q9LRP7">
    <property type="interactions" value="84"/>
</dbReference>
<dbReference type="IntAct" id="Q9LRP7">
    <property type="interactions" value="1"/>
</dbReference>
<dbReference type="STRING" id="3702.Q9LRP7"/>
<dbReference type="iPTMnet" id="Q9LRP7"/>
<dbReference type="PaxDb" id="3702-AT3G15580.1"/>
<dbReference type="ProteomicsDB" id="246741"/>
<dbReference type="EnsemblPlants" id="AT3G15580.1">
    <property type="protein sequence ID" value="AT3G15580.1"/>
    <property type="gene ID" value="AT3G15580"/>
</dbReference>
<dbReference type="GeneID" id="820798"/>
<dbReference type="Gramene" id="AT3G15580.1">
    <property type="protein sequence ID" value="AT3G15580.1"/>
    <property type="gene ID" value="AT3G15580"/>
</dbReference>
<dbReference type="KEGG" id="ath:AT3G15580"/>
<dbReference type="Araport" id="AT3G15580"/>
<dbReference type="TAIR" id="AT3G15580">
    <property type="gene designation" value="APG8H"/>
</dbReference>
<dbReference type="eggNOG" id="KOG1654">
    <property type="taxonomic scope" value="Eukaryota"/>
</dbReference>
<dbReference type="HOGENOM" id="CLU_119276_0_1_1"/>
<dbReference type="InParanoid" id="Q9LRP7"/>
<dbReference type="OMA" id="EMFGCFL"/>
<dbReference type="OrthoDB" id="6738456at2759"/>
<dbReference type="PhylomeDB" id="Q9LRP7"/>
<dbReference type="PRO" id="PR:Q9LRP7"/>
<dbReference type="Proteomes" id="UP000006548">
    <property type="component" value="Chromosome 3"/>
</dbReference>
<dbReference type="ExpressionAtlas" id="Q9LRP7">
    <property type="expression patterns" value="baseline and differential"/>
</dbReference>
<dbReference type="GO" id="GO:0005776">
    <property type="term" value="C:autophagosome"/>
    <property type="evidence" value="ECO:0000314"/>
    <property type="project" value="TAIR"/>
</dbReference>
<dbReference type="GO" id="GO:0000421">
    <property type="term" value="C:autophagosome membrane"/>
    <property type="evidence" value="ECO:0007669"/>
    <property type="project" value="UniProtKB-SubCell"/>
</dbReference>
<dbReference type="GO" id="GO:0031410">
    <property type="term" value="C:cytoplasmic vesicle"/>
    <property type="evidence" value="ECO:0007669"/>
    <property type="project" value="UniProtKB-KW"/>
</dbReference>
<dbReference type="GO" id="GO:0005874">
    <property type="term" value="C:microtubule"/>
    <property type="evidence" value="ECO:0007669"/>
    <property type="project" value="UniProtKB-KW"/>
</dbReference>
<dbReference type="GO" id="GO:0019779">
    <property type="term" value="F:Atg8 activating enzyme activity"/>
    <property type="evidence" value="ECO:0000250"/>
    <property type="project" value="TAIR"/>
</dbReference>
<dbReference type="GO" id="GO:0019776">
    <property type="term" value="F:Atg8-family ligase activity"/>
    <property type="evidence" value="ECO:0000250"/>
    <property type="project" value="TAIR"/>
</dbReference>
<dbReference type="GO" id="GO:0019786">
    <property type="term" value="F:protein-phosphatidylethanolamide deconjugating activity"/>
    <property type="evidence" value="ECO:0000250"/>
    <property type="project" value="TAIR"/>
</dbReference>
<dbReference type="GO" id="GO:0006914">
    <property type="term" value="P:autophagy"/>
    <property type="evidence" value="ECO:0000250"/>
    <property type="project" value="TAIR"/>
</dbReference>
<dbReference type="GO" id="GO:0015031">
    <property type="term" value="P:protein transport"/>
    <property type="evidence" value="ECO:0007669"/>
    <property type="project" value="UniProtKB-KW"/>
</dbReference>
<dbReference type="CDD" id="cd16108">
    <property type="entry name" value="Ubl_ATG8_like"/>
    <property type="match status" value="1"/>
</dbReference>
<dbReference type="FunFam" id="3.10.20.90:FF:000235">
    <property type="entry name" value="Autophagy-related protein"/>
    <property type="match status" value="1"/>
</dbReference>
<dbReference type="Gene3D" id="3.10.20.90">
    <property type="entry name" value="Phosphatidylinositol 3-kinase Catalytic Subunit, Chain A, domain 1"/>
    <property type="match status" value="1"/>
</dbReference>
<dbReference type="InterPro" id="IPR004241">
    <property type="entry name" value="Atg8-like"/>
</dbReference>
<dbReference type="InterPro" id="IPR029071">
    <property type="entry name" value="Ubiquitin-like_domsf"/>
</dbReference>
<dbReference type="PANTHER" id="PTHR10969">
    <property type="entry name" value="MICROTUBULE-ASSOCIATED PROTEINS 1A/1B LIGHT CHAIN 3-RELATED"/>
    <property type="match status" value="1"/>
</dbReference>
<dbReference type="Pfam" id="PF02991">
    <property type="entry name" value="ATG8"/>
    <property type="match status" value="1"/>
</dbReference>
<dbReference type="SUPFAM" id="SSF54236">
    <property type="entry name" value="Ubiquitin-like"/>
    <property type="match status" value="1"/>
</dbReference>
<keyword id="KW-0072">Autophagy</keyword>
<keyword id="KW-0963">Cytoplasm</keyword>
<keyword id="KW-0968">Cytoplasmic vesicle</keyword>
<keyword id="KW-0206">Cytoskeleton</keyword>
<keyword id="KW-0449">Lipoprotein</keyword>
<keyword id="KW-0472">Membrane</keyword>
<keyword id="KW-0493">Microtubule</keyword>
<keyword id="KW-0653">Protein transport</keyword>
<keyword id="KW-1185">Reference proteome</keyword>
<keyword id="KW-0813">Transport</keyword>
<keyword id="KW-0833">Ubl conjugation pathway</keyword>
<keyword id="KW-0926">Vacuole</keyword>
<protein>
    <recommendedName>
        <fullName>Autophagy-related protein 8i</fullName>
    </recommendedName>
    <alternativeName>
        <fullName>Autophagy-related ubiquitin-like modifier ATG8i</fullName>
        <shortName>AtAPG8i</shortName>
        <shortName>Protein autophagy 8i</shortName>
    </alternativeName>
</protein>
<feature type="chain" id="PRO_0000286920" description="Autophagy-related protein 8i">
    <location>
        <begin position="1"/>
        <end position="115"/>
    </location>
</feature>
<feature type="lipid moiety-binding region" description="Phosphatidylethanolamine amidated glycine" evidence="1">
    <location>
        <position position="115"/>
    </location>
</feature>
<evidence type="ECO:0000250" key="1">
    <source>
        <dbReference type="UniProtKB" id="P38182"/>
    </source>
</evidence>
<evidence type="ECO:0000250" key="2">
    <source>
        <dbReference type="UniProtKB" id="Q8LEM4"/>
    </source>
</evidence>
<evidence type="ECO:0000250" key="3">
    <source>
        <dbReference type="UniProtKB" id="Q9SL04"/>
    </source>
</evidence>
<evidence type="ECO:0000269" key="4">
    <source>
    </source>
</evidence>
<evidence type="ECO:0000269" key="5">
    <source>
    </source>
</evidence>
<evidence type="ECO:0000305" key="6"/>
<reference key="1">
    <citation type="journal article" date="2002" name="J. Biol. Chem.">
        <title>The APG8/12-activating enzyme APG7 is required for proper nutrient recycling and senescence in Arabidopsis thaliana.</title>
        <authorList>
            <person name="Doelling J.H."/>
            <person name="Walker J.M."/>
            <person name="Friedman E.M."/>
            <person name="Thompson A.R."/>
            <person name="Vierstra R.D."/>
        </authorList>
    </citation>
    <scope>NUCLEOTIDE SEQUENCE [MRNA]</scope>
    <source>
        <strain>cv. Columbia</strain>
    </source>
</reference>
<reference key="2">
    <citation type="journal article" date="2002" name="Plant Physiol.">
        <title>Leaf senescence and starvation-induced chlorosis are accelerated by the disruption of an Arabidopsis autophagy gene.</title>
        <authorList>
            <person name="Hanaoka H."/>
            <person name="Noda T."/>
            <person name="Shirano Y."/>
            <person name="Kato T."/>
            <person name="Hayashi H."/>
            <person name="Shibata D."/>
            <person name="Tabata S."/>
            <person name="Ohsumi Y."/>
        </authorList>
    </citation>
    <scope>NUCLEOTIDE SEQUENCE [MRNA]</scope>
    <scope>NOMENCLATURE</scope>
    <scope>GENE FAMILY</scope>
</reference>
<reference key="3">
    <citation type="journal article" date="2000" name="DNA Res.">
        <title>Structural analysis of Arabidopsis thaliana chromosome 3. I. Sequence features of the regions of 4,504,864 bp covered by sixty P1 and TAC clones.</title>
        <authorList>
            <person name="Sato S."/>
            <person name="Nakamura Y."/>
            <person name="Kaneko T."/>
            <person name="Katoh T."/>
            <person name="Asamizu E."/>
            <person name="Tabata S."/>
        </authorList>
    </citation>
    <scope>NUCLEOTIDE SEQUENCE [LARGE SCALE GENOMIC DNA]</scope>
    <source>
        <strain>cv. Columbia</strain>
    </source>
</reference>
<reference key="4">
    <citation type="journal article" date="2017" name="Plant J.">
        <title>Araport11: a complete reannotation of the Arabidopsis thaliana reference genome.</title>
        <authorList>
            <person name="Cheng C.Y."/>
            <person name="Krishnakumar V."/>
            <person name="Chan A.P."/>
            <person name="Thibaud-Nissen F."/>
            <person name="Schobel S."/>
            <person name="Town C.D."/>
        </authorList>
    </citation>
    <scope>GENOME REANNOTATION</scope>
    <source>
        <strain>cv. Columbia</strain>
    </source>
</reference>
<reference key="5">
    <citation type="submission" date="2002-03" db="EMBL/GenBank/DDBJ databases">
        <title>Full-length cDNA from Arabidopsis thaliana.</title>
        <authorList>
            <person name="Brover V.V."/>
            <person name="Troukhan M.E."/>
            <person name="Alexandrov N.A."/>
            <person name="Lu Y.-P."/>
            <person name="Flavell R.B."/>
            <person name="Feldmann K.A."/>
        </authorList>
    </citation>
    <scope>NUCLEOTIDE SEQUENCE [LARGE SCALE MRNA]</scope>
</reference>
<reference key="6">
    <citation type="submission" date="2006-02" db="EMBL/GenBank/DDBJ databases">
        <title>Arabidopsis ORF clones.</title>
        <authorList>
            <person name="Shinn P."/>
            <person name="Chen H."/>
            <person name="Kim C.J."/>
            <person name="Ecker J.R."/>
        </authorList>
    </citation>
    <scope>NUCLEOTIDE SEQUENCE [LARGE SCALE MRNA]</scope>
    <source>
        <strain>cv. Columbia</strain>
    </source>
</reference>
<reference key="7">
    <citation type="journal article" date="2004" name="Plant Cell">
        <title>Processing of ATG8s, ubiquitin-like proteins, and their deconjugation by ATG4s are essential for plant autophagy.</title>
        <authorList>
            <person name="Yoshimoto K."/>
            <person name="Hanaoka H."/>
            <person name="Sato S."/>
            <person name="Kato T."/>
            <person name="Tabata S."/>
            <person name="Noda T."/>
            <person name="Ohsumi Y."/>
        </authorList>
    </citation>
    <scope>TISSUE SPECIFICITY</scope>
</reference>
<reference key="8">
    <citation type="journal article" date="2011" name="Autophagy">
        <title>Plant NBR1 is a selective autophagy substrate and a functional hybrid of the mammalian autophagic adapters NBR1 and p62/SQSTM1.</title>
        <authorList>
            <person name="Svenning S."/>
            <person name="Lamark T."/>
            <person name="Krause K."/>
            <person name="Johansen T."/>
        </authorList>
    </citation>
    <scope>INTERACTION WITH NBR1</scope>
</reference>
<organism>
    <name type="scientific">Arabidopsis thaliana</name>
    <name type="common">Mouse-ear cress</name>
    <dbReference type="NCBI Taxonomy" id="3702"/>
    <lineage>
        <taxon>Eukaryota</taxon>
        <taxon>Viridiplantae</taxon>
        <taxon>Streptophyta</taxon>
        <taxon>Embryophyta</taxon>
        <taxon>Tracheophyta</taxon>
        <taxon>Spermatophyta</taxon>
        <taxon>Magnoliopsida</taxon>
        <taxon>eudicotyledons</taxon>
        <taxon>Gunneridae</taxon>
        <taxon>Pentapetalae</taxon>
        <taxon>rosids</taxon>
        <taxon>malvids</taxon>
        <taxon>Brassicales</taxon>
        <taxon>Brassicaceae</taxon>
        <taxon>Camelineae</taxon>
        <taxon>Arabidopsis</taxon>
    </lineage>
</organism>
<proteinExistence type="evidence at protein level"/>
<gene>
    <name type="primary">ATG8I</name>
    <name type="synonym">APG8I</name>
    <name type="ordered locus">At3g15580</name>
    <name type="ORF">MQD17.3</name>
</gene>
<sequence>MKSFKEQYTLDERLAESREIIAKYPTRIPVIAEKYCKTDLPAIEKKKFLVPRDMSVGQFIYILSARLHLSPGKALFVFVNNTLPQTAALMDSVYESYKDDDGFVYMCYSSEKTFG</sequence>
<accession>Q9LRP7</accession>